<keyword id="KW-0024">Alternative initiation</keyword>
<keyword id="KW-0204">Cytolysis</keyword>
<keyword id="KW-1030">Host cell inner membrane</keyword>
<keyword id="KW-0578">Host cell lysis by virus</keyword>
<keyword id="KW-1032">Host cell membrane</keyword>
<keyword id="KW-1043">Host membrane</keyword>
<keyword id="KW-0472">Membrane</keyword>
<keyword id="KW-1185">Reference proteome</keyword>
<keyword id="KW-0812">Transmembrane</keyword>
<keyword id="KW-1133">Transmembrane helix</keyword>
<keyword id="KW-1188">Viral release from host cell</keyword>
<dbReference type="EMBL" id="X85008">
    <property type="protein sequence ID" value="CAA59360.1"/>
    <property type="molecule type" value="Genomic_DNA"/>
</dbReference>
<dbReference type="EMBL" id="X85008">
    <property type="protein sequence ID" value="CAA59361.1"/>
    <property type="status" value="ALT_INIT"/>
    <property type="molecule type" value="Genomic_DNA"/>
</dbReference>
<dbReference type="EMBL" id="AJ242593">
    <property type="protein sequence ID" value="CAB53810.1"/>
    <property type="molecule type" value="Genomic_DNA"/>
</dbReference>
<dbReference type="PIR" id="S69798">
    <property type="entry name" value="S69798"/>
</dbReference>
<dbReference type="RefSeq" id="NP_463485.1">
    <molecule id="Q37975-1"/>
    <property type="nucleotide sequence ID" value="NC_003216.1"/>
</dbReference>
<dbReference type="TCDB" id="1.E.21.2.1">
    <property type="family name" value="the listeria phage a118 holin (hol118) family"/>
</dbReference>
<dbReference type="GeneID" id="922401"/>
<dbReference type="KEGG" id="vg:922401"/>
<dbReference type="OrthoDB" id="21682at10239"/>
<dbReference type="Proteomes" id="UP000002666">
    <property type="component" value="Genome"/>
</dbReference>
<dbReference type="GO" id="GO:0020002">
    <property type="term" value="C:host cell plasma membrane"/>
    <property type="evidence" value="ECO:0007669"/>
    <property type="project" value="UniProtKB-SubCell"/>
</dbReference>
<dbReference type="GO" id="GO:0016020">
    <property type="term" value="C:membrane"/>
    <property type="evidence" value="ECO:0007669"/>
    <property type="project" value="UniProtKB-KW"/>
</dbReference>
<dbReference type="GO" id="GO:0031640">
    <property type="term" value="P:killing of cells of another organism"/>
    <property type="evidence" value="ECO:0007669"/>
    <property type="project" value="UniProtKB-KW"/>
</dbReference>
<dbReference type="InterPro" id="IPR009708">
    <property type="entry name" value="Phage_A118_holin/antiholin"/>
</dbReference>
<dbReference type="Pfam" id="PF06946">
    <property type="entry name" value="Phage_holin_5_1"/>
    <property type="match status" value="1"/>
</dbReference>
<name>HOLIN_BPA18</name>
<proteinExistence type="inferred from homology"/>
<protein>
    <recommendedName>
        <fullName>Putative antiholin</fullName>
    </recommendedName>
</protein>
<sequence>MIEMEFGKELLVYMTFLVVVTPVFVQAIKKTELVPSKWLPTVSILIGAILGALATFLDGSGSLATMIWAGALAGAGGTGLFEQFTNRSKKYGEDDK</sequence>
<accession>Q37975</accession>
<evidence type="ECO:0000250" key="1">
    <source>
        <dbReference type="UniProtKB" id="P03705"/>
    </source>
</evidence>
<evidence type="ECO:0000255" key="2"/>
<evidence type="ECO:0000305" key="3"/>
<gene>
    <name type="primary">hol</name>
    <name type="synonym">hol118</name>
</gene>
<reference key="1">
    <citation type="journal article" date="1995" name="Mol. Microbiol.">
        <title>Heterogeneous endolysins in Listeria monocytogenes bacteriophages: a new class of enzymes and evidence for conserved holin genes within the siphoviral lysis cassettes.</title>
        <authorList>
            <person name="Loessner M.J."/>
            <person name="Wendlinger G."/>
            <person name="Scherer S."/>
        </authorList>
    </citation>
    <scope>NUCLEOTIDE SEQUENCE [GENOMIC DNA]</scope>
</reference>
<reference key="2">
    <citation type="journal article" date="2000" name="Mol. Microbiol.">
        <title>Complete nucleotide sequence, molecular analysis and genome structure of bacteriophage A118 of Listeria monocytogenes: implications for phage evolution.</title>
        <authorList>
            <person name="Loessner M.J."/>
            <person name="Inman R.B."/>
            <person name="Lauer P."/>
            <person name="Calendar R."/>
        </authorList>
    </citation>
    <scope>NUCLEOTIDE SEQUENCE [LARGE SCALE GENOMIC DNA]</scope>
</reference>
<organismHost>
    <name type="scientific">Listeria monocytogenes</name>
    <dbReference type="NCBI Taxonomy" id="1639"/>
</organismHost>
<feature type="chain" id="PRO_0000077798" description="Putative antiholin">
    <location>
        <begin position="1"/>
        <end position="96"/>
    </location>
</feature>
<feature type="topological domain" description="Cytoplasmic" evidence="1">
    <location>
        <begin position="1"/>
        <end position="32"/>
    </location>
</feature>
<feature type="transmembrane region" description="Helical" evidence="2">
    <location>
        <begin position="33"/>
        <end position="55"/>
    </location>
</feature>
<feature type="topological domain" description="Periplasmic" evidence="1">
    <location>
        <begin position="56"/>
        <end position="60"/>
    </location>
</feature>
<feature type="transmembrane region" description="Helical" evidence="2">
    <location>
        <begin position="61"/>
        <end position="81"/>
    </location>
</feature>
<feature type="topological domain" description="Cytoplasmic" evidence="1">
    <location>
        <begin position="82"/>
        <end position="96"/>
    </location>
</feature>
<feature type="splice variant" id="VSP_060169" description="In isoform Holin." evidence="3">
    <location>
        <begin position="1"/>
        <end position="3"/>
    </location>
</feature>
<feature type="topological domain" description="Periplasmic" evidence="1">
    <location sequence="Q37975-2">
        <begin position="1"/>
        <end position="4"/>
    </location>
</feature>
<feature type="transmembrane region" description="Helical" evidence="1">
    <location sequence="Q37975-2">
        <begin position="5"/>
        <end position="25"/>
    </location>
</feature>
<feature type="topological domain" description="Cytoplasmic" evidence="1">
    <location sequence="Q37975-2">
        <begin position="26"/>
        <end position="29"/>
    </location>
</feature>
<comment type="function">
    <molecule>Isoform Holin</molecule>
    <text evidence="1">Accumulates harmlessly in the cytoplasmic membrane until it reaches a critical concentration that triggers the formation of micron-scale pores (holes) causing host cell membrane disruption and endolysin escape into the periplasmic space (By similarity). Determines the precise timing of host cell lysis (By similarity). Participates with the endolysin and spanin proteins in the sequential events which lead to the programmed host cell lysis releasing the mature viral particles from the host cell (By similarity).</text>
</comment>
<comment type="function">
    <text evidence="1">Isoform Antiholin: Counteracts the aggregation of the holin molecules and thus of pore formation.</text>
</comment>
<comment type="subunit">
    <molecule>Isoform Holin</molecule>
    <text evidence="1">Homomultimer. Interacts with isoform Antiholin; this interaction blocks the holin homomultimerization and delays host cell lysis.</text>
</comment>
<comment type="subcellular location">
    <subcellularLocation>
        <location evidence="1">Host cell inner membrane</location>
        <topology evidence="1">Multi-pass membrane protein</topology>
    </subcellularLocation>
    <text evidence="3">Classified as a class I holin.</text>
</comment>
<comment type="alternative products">
    <event type="alternative initiation"/>
    <isoform>
        <id>Q37975-1</id>
        <name>Putative antiholin</name>
        <sequence type="displayed"/>
    </isoform>
    <isoform>
        <id>Q37975-2</id>
        <name>Holin</name>
        <sequence type="described" ref="VSP_060169"/>
    </isoform>
</comment>
<comment type="domain">
    <text evidence="1">Isoform Holin has 3 transmembrane regions whereas isoform Antiholin lacks the first transmembrane region.</text>
</comment>
<comment type="sequence caution" evidence="3">
    <conflict type="erroneous initiation">
        <sequence resource="EMBL-CDS" id="CAA59361"/>
    </conflict>
</comment>
<organism>
    <name type="scientific">Listeria phage A118</name>
    <name type="common">Bacteriophage A118</name>
    <dbReference type="NCBI Taxonomy" id="40521"/>
    <lineage>
        <taxon>Viruses</taxon>
        <taxon>Duplodnaviria</taxon>
        <taxon>Heunggongvirae</taxon>
        <taxon>Uroviricota</taxon>
        <taxon>Caudoviricetes</taxon>
    </lineage>
</organism>